<comment type="function">
    <text evidence="1">Associates with the EF-Tu.GDP complex and induces the exchange of GDP to GTP. It remains bound to the aminoacyl-tRNA.EF-Tu.GTP complex up to the GTP hydrolysis stage on the ribosome.</text>
</comment>
<comment type="subcellular location">
    <subcellularLocation>
        <location evidence="1">Cytoplasm</location>
    </subcellularLocation>
</comment>
<comment type="similarity">
    <text evidence="1">Belongs to the EF-Ts family.</text>
</comment>
<proteinExistence type="inferred from homology"/>
<evidence type="ECO:0000255" key="1">
    <source>
        <dbReference type="HAMAP-Rule" id="MF_00050"/>
    </source>
</evidence>
<organism>
    <name type="scientific">Methylibium petroleiphilum (strain ATCC BAA-1232 / LMG 22953 / PM1)</name>
    <dbReference type="NCBI Taxonomy" id="420662"/>
    <lineage>
        <taxon>Bacteria</taxon>
        <taxon>Pseudomonadati</taxon>
        <taxon>Pseudomonadota</taxon>
        <taxon>Betaproteobacteria</taxon>
        <taxon>Burkholderiales</taxon>
        <taxon>Sphaerotilaceae</taxon>
        <taxon>Methylibium</taxon>
    </lineage>
</organism>
<feature type="chain" id="PRO_1000006125" description="Elongation factor Ts">
    <location>
        <begin position="1"/>
        <end position="302"/>
    </location>
</feature>
<feature type="region of interest" description="Involved in Mg(2+) ion dislocation from EF-Tu" evidence="1">
    <location>
        <begin position="80"/>
        <end position="83"/>
    </location>
</feature>
<dbReference type="EMBL" id="CP000555">
    <property type="protein sequence ID" value="ABM94936.1"/>
    <property type="molecule type" value="Genomic_DNA"/>
</dbReference>
<dbReference type="RefSeq" id="WP_011829573.1">
    <property type="nucleotide sequence ID" value="NC_008825.1"/>
</dbReference>
<dbReference type="SMR" id="A2SH97"/>
<dbReference type="STRING" id="420662.Mpe_A1978"/>
<dbReference type="KEGG" id="mpt:Mpe_A1978"/>
<dbReference type="eggNOG" id="COG0264">
    <property type="taxonomic scope" value="Bacteria"/>
</dbReference>
<dbReference type="HOGENOM" id="CLU_047155_0_2_4"/>
<dbReference type="Proteomes" id="UP000000366">
    <property type="component" value="Chromosome"/>
</dbReference>
<dbReference type="GO" id="GO:0005737">
    <property type="term" value="C:cytoplasm"/>
    <property type="evidence" value="ECO:0007669"/>
    <property type="project" value="UniProtKB-SubCell"/>
</dbReference>
<dbReference type="GO" id="GO:0003746">
    <property type="term" value="F:translation elongation factor activity"/>
    <property type="evidence" value="ECO:0007669"/>
    <property type="project" value="UniProtKB-UniRule"/>
</dbReference>
<dbReference type="CDD" id="cd14275">
    <property type="entry name" value="UBA_EF-Ts"/>
    <property type="match status" value="1"/>
</dbReference>
<dbReference type="FunFam" id="1.10.8.10:FF:000001">
    <property type="entry name" value="Elongation factor Ts"/>
    <property type="match status" value="1"/>
</dbReference>
<dbReference type="Gene3D" id="1.10.286.20">
    <property type="match status" value="1"/>
</dbReference>
<dbReference type="Gene3D" id="1.10.8.10">
    <property type="entry name" value="DNA helicase RuvA subunit, C-terminal domain"/>
    <property type="match status" value="1"/>
</dbReference>
<dbReference type="Gene3D" id="3.30.479.20">
    <property type="entry name" value="Elongation factor Ts, dimerisation domain"/>
    <property type="match status" value="2"/>
</dbReference>
<dbReference type="HAMAP" id="MF_00050">
    <property type="entry name" value="EF_Ts"/>
    <property type="match status" value="1"/>
</dbReference>
<dbReference type="InterPro" id="IPR036402">
    <property type="entry name" value="EF-Ts_dimer_sf"/>
</dbReference>
<dbReference type="InterPro" id="IPR001816">
    <property type="entry name" value="Transl_elong_EFTs/EF1B"/>
</dbReference>
<dbReference type="InterPro" id="IPR014039">
    <property type="entry name" value="Transl_elong_EFTs/EF1B_dimer"/>
</dbReference>
<dbReference type="InterPro" id="IPR018101">
    <property type="entry name" value="Transl_elong_Ts_CS"/>
</dbReference>
<dbReference type="InterPro" id="IPR009060">
    <property type="entry name" value="UBA-like_sf"/>
</dbReference>
<dbReference type="NCBIfam" id="TIGR00116">
    <property type="entry name" value="tsf"/>
    <property type="match status" value="1"/>
</dbReference>
<dbReference type="PANTHER" id="PTHR11741">
    <property type="entry name" value="ELONGATION FACTOR TS"/>
    <property type="match status" value="1"/>
</dbReference>
<dbReference type="PANTHER" id="PTHR11741:SF0">
    <property type="entry name" value="ELONGATION FACTOR TS, MITOCHONDRIAL"/>
    <property type="match status" value="1"/>
</dbReference>
<dbReference type="Pfam" id="PF00889">
    <property type="entry name" value="EF_TS"/>
    <property type="match status" value="1"/>
</dbReference>
<dbReference type="SUPFAM" id="SSF54713">
    <property type="entry name" value="Elongation factor Ts (EF-Ts), dimerisation domain"/>
    <property type="match status" value="2"/>
</dbReference>
<dbReference type="SUPFAM" id="SSF46934">
    <property type="entry name" value="UBA-like"/>
    <property type="match status" value="1"/>
</dbReference>
<dbReference type="PROSITE" id="PS01127">
    <property type="entry name" value="EF_TS_2"/>
    <property type="match status" value="1"/>
</dbReference>
<gene>
    <name evidence="1" type="primary">tsf</name>
    <name type="ordered locus">Mpe_A1978</name>
</gene>
<protein>
    <recommendedName>
        <fullName evidence="1">Elongation factor Ts</fullName>
        <shortName evidence="1">EF-Ts</shortName>
    </recommendedName>
</protein>
<reference key="1">
    <citation type="journal article" date="2007" name="J. Bacteriol.">
        <title>Whole-genome analysis of the methyl tert-butyl ether-degrading beta-proteobacterium Methylibium petroleiphilum PM1.</title>
        <authorList>
            <person name="Kane S.R."/>
            <person name="Chakicherla A.Y."/>
            <person name="Chain P.S.G."/>
            <person name="Schmidt R."/>
            <person name="Shin M.W."/>
            <person name="Legler T.C."/>
            <person name="Scow K.M."/>
            <person name="Larimer F.W."/>
            <person name="Lucas S.M."/>
            <person name="Richardson P.M."/>
            <person name="Hristova K.R."/>
        </authorList>
    </citation>
    <scope>NUCLEOTIDE SEQUENCE [LARGE SCALE GENOMIC DNA]</scope>
    <source>
        <strain>ATCC BAA-1232 / LMG 22953 / PM1</strain>
    </source>
</reference>
<keyword id="KW-0963">Cytoplasm</keyword>
<keyword id="KW-0251">Elongation factor</keyword>
<keyword id="KW-0648">Protein biosynthesis</keyword>
<keyword id="KW-1185">Reference proteome</keyword>
<name>EFTS_METPP</name>
<sequence>MPAITASMVAELRAKTDAPMMECKKALTEAEGDLNKAEELLRVKLGSKASKAASRVTAEGIVVAHISGTTGALMELNCETDFVSKNDDFLAFGKTLAELVATKAPVDVAALSALEIAGVTVEATRTALIGKIGENIAIRRFKRFSGDSKLVSYLHGTRIGVVVEYTGDDVAAKDVAMHVAAMKPVALTSADVPADLIEKERNVAAGKAAEDAKAAEAAGKAPQSAEIVTKRVEGSVQKFLKEVSLFNQTFVKNDKQTVEQMLKAASTTIKGFTMYIVGEGIEKKTDDFAAEVAAQVAAAKGQ</sequence>
<accession>A2SH97</accession>